<evidence type="ECO:0000255" key="1">
    <source>
        <dbReference type="PROSITE-ProRule" id="PRU00303"/>
    </source>
</evidence>
<evidence type="ECO:0000305" key="2"/>
<accession>Q6GJN3</accession>
<dbReference type="EMBL" id="BX571856">
    <property type="protein sequence ID" value="CAG39459.1"/>
    <property type="status" value="ALT_INIT"/>
    <property type="molecule type" value="Genomic_DNA"/>
</dbReference>
<dbReference type="RefSeq" id="WP_001814080.1">
    <property type="nucleotide sequence ID" value="NC_002952.2"/>
</dbReference>
<dbReference type="SMR" id="Q6GJN3"/>
<dbReference type="KEGG" id="sar:SAR0438"/>
<dbReference type="HOGENOM" id="CLU_071589_0_1_9"/>
<dbReference type="Proteomes" id="UP000000596">
    <property type="component" value="Chromosome"/>
</dbReference>
<dbReference type="GO" id="GO:0005886">
    <property type="term" value="C:plasma membrane"/>
    <property type="evidence" value="ECO:0007669"/>
    <property type="project" value="UniProtKB-SubCell"/>
</dbReference>
<dbReference type="Gene3D" id="2.50.20.40">
    <property type="match status" value="1"/>
</dbReference>
<dbReference type="InterPro" id="IPR007595">
    <property type="entry name" value="Csa"/>
</dbReference>
<dbReference type="InterPro" id="IPR038641">
    <property type="entry name" value="Csa_sf"/>
</dbReference>
<dbReference type="NCBIfam" id="TIGR01742">
    <property type="entry name" value="SA_tandem_lipo"/>
    <property type="match status" value="1"/>
</dbReference>
<dbReference type="Pfam" id="PF04507">
    <property type="entry name" value="DUF576"/>
    <property type="match status" value="1"/>
</dbReference>
<dbReference type="PROSITE" id="PS51257">
    <property type="entry name" value="PROKAR_LIPOPROTEIN"/>
    <property type="match status" value="1"/>
</dbReference>
<feature type="signal peptide" evidence="1">
    <location>
        <begin position="1"/>
        <end position="22"/>
    </location>
</feature>
<feature type="chain" id="PRO_0000282154" description="Uncharacterized lipoprotein SAR0438">
    <location>
        <begin position="23"/>
        <end position="260"/>
    </location>
</feature>
<feature type="lipid moiety-binding region" description="N-palmitoyl cysteine" evidence="1">
    <location>
        <position position="23"/>
    </location>
</feature>
<feature type="lipid moiety-binding region" description="S-diacylglycerol cysteine" evidence="1">
    <location>
        <position position="23"/>
    </location>
</feature>
<sequence length="260" mass="30154">MGNIKSFALYISILLLIVVVAGCGKSDKTKEDSKEEQIKKSFAKTLDMYPIKNLEDLYDKEGYRDGEFKKGDKGTWTLLTSFSKSNKPDEIDDEGMVLYLNRNTKKATGYYFVNKIYDDISKNQNEKKYRVELKNNKIVLLDNVEDEKLKQKIENFKFFSQYADFKDLKNYQDGSITTNENIPSYEAEYKLNNSDENVKKLRDIYPITTKKAPILKLHIDGDIKGSSVGYKKIEYKFSKVKDQETTLRDYLNFGPSDEDS</sequence>
<comment type="subcellular location">
    <subcellularLocation>
        <location evidence="1">Cell membrane</location>
        <topology evidence="1">Lipid-anchor</topology>
    </subcellularLocation>
</comment>
<comment type="similarity">
    <text evidence="2">Belongs to the staphylococcal tandem lipoprotein family.</text>
</comment>
<comment type="sequence caution" evidence="2">
    <conflict type="erroneous initiation">
        <sequence resource="EMBL-CDS" id="CAG39459"/>
    </conflict>
</comment>
<proteinExistence type="inferred from homology"/>
<name>Y438_STAAR</name>
<protein>
    <recommendedName>
        <fullName>Uncharacterized lipoprotein SAR0438</fullName>
    </recommendedName>
</protein>
<gene>
    <name type="ordered locus">SAR0438</name>
</gene>
<reference key="1">
    <citation type="journal article" date="2004" name="Proc. Natl. Acad. Sci. U.S.A.">
        <title>Complete genomes of two clinical Staphylococcus aureus strains: evidence for the rapid evolution of virulence and drug resistance.</title>
        <authorList>
            <person name="Holden M.T.G."/>
            <person name="Feil E.J."/>
            <person name="Lindsay J.A."/>
            <person name="Peacock S.J."/>
            <person name="Day N.P.J."/>
            <person name="Enright M.C."/>
            <person name="Foster T.J."/>
            <person name="Moore C.E."/>
            <person name="Hurst L."/>
            <person name="Atkin R."/>
            <person name="Barron A."/>
            <person name="Bason N."/>
            <person name="Bentley S.D."/>
            <person name="Chillingworth C."/>
            <person name="Chillingworth T."/>
            <person name="Churcher C."/>
            <person name="Clark L."/>
            <person name="Corton C."/>
            <person name="Cronin A."/>
            <person name="Doggett J."/>
            <person name="Dowd L."/>
            <person name="Feltwell T."/>
            <person name="Hance Z."/>
            <person name="Harris B."/>
            <person name="Hauser H."/>
            <person name="Holroyd S."/>
            <person name="Jagels K."/>
            <person name="James K.D."/>
            <person name="Lennard N."/>
            <person name="Line A."/>
            <person name="Mayes R."/>
            <person name="Moule S."/>
            <person name="Mungall K."/>
            <person name="Ormond D."/>
            <person name="Quail M.A."/>
            <person name="Rabbinowitsch E."/>
            <person name="Rutherford K.M."/>
            <person name="Sanders M."/>
            <person name="Sharp S."/>
            <person name="Simmonds M."/>
            <person name="Stevens K."/>
            <person name="Whitehead S."/>
            <person name="Barrell B.G."/>
            <person name="Spratt B.G."/>
            <person name="Parkhill J."/>
        </authorList>
    </citation>
    <scope>NUCLEOTIDE SEQUENCE [LARGE SCALE GENOMIC DNA]</scope>
    <source>
        <strain>MRSA252</strain>
    </source>
</reference>
<organism>
    <name type="scientific">Staphylococcus aureus (strain MRSA252)</name>
    <dbReference type="NCBI Taxonomy" id="282458"/>
    <lineage>
        <taxon>Bacteria</taxon>
        <taxon>Bacillati</taxon>
        <taxon>Bacillota</taxon>
        <taxon>Bacilli</taxon>
        <taxon>Bacillales</taxon>
        <taxon>Staphylococcaceae</taxon>
        <taxon>Staphylococcus</taxon>
    </lineage>
</organism>
<keyword id="KW-1003">Cell membrane</keyword>
<keyword id="KW-0449">Lipoprotein</keyword>
<keyword id="KW-0472">Membrane</keyword>
<keyword id="KW-0564">Palmitate</keyword>
<keyword id="KW-0732">Signal</keyword>